<gene>
    <name type="primary">ywjC</name>
    <name type="ordered locus">BSU37210</name>
</gene>
<accession>P45863</accession>
<organism>
    <name type="scientific">Bacillus subtilis (strain 168)</name>
    <dbReference type="NCBI Taxonomy" id="224308"/>
    <lineage>
        <taxon>Bacteria</taxon>
        <taxon>Bacillati</taxon>
        <taxon>Bacillota</taxon>
        <taxon>Bacilli</taxon>
        <taxon>Bacillales</taxon>
        <taxon>Bacillaceae</taxon>
        <taxon>Bacillus</taxon>
    </lineage>
</organism>
<protein>
    <recommendedName>
        <fullName>Uncharacterized protein YwjC</fullName>
    </recommendedName>
</protein>
<feature type="chain" id="PRO_0000049976" description="Uncharacterized protein YwjC">
    <location>
        <begin position="1"/>
        <end position="90"/>
    </location>
</feature>
<reference key="1">
    <citation type="journal article" date="1997" name="Microbiology">
        <title>The Bacillus subtilis genome from gerBC (311 degrees) to licR (334 degrees).</title>
        <authorList>
            <person name="Presecan E."/>
            <person name="Moszer I."/>
            <person name="Boursier L."/>
            <person name="Cruz Ramos H."/>
            <person name="De La Fuente V."/>
            <person name="Hullo M.-F."/>
            <person name="Lelong C."/>
            <person name="Schleich S."/>
            <person name="Sekowska A."/>
            <person name="Song B.H."/>
            <person name="Villani G."/>
            <person name="Kunst F."/>
            <person name="Danchin A."/>
            <person name="Glaser P."/>
        </authorList>
    </citation>
    <scope>NUCLEOTIDE SEQUENCE [GENOMIC DNA]</scope>
    <source>
        <strain>168</strain>
    </source>
</reference>
<reference key="2">
    <citation type="journal article" date="1997" name="Nature">
        <title>The complete genome sequence of the Gram-positive bacterium Bacillus subtilis.</title>
        <authorList>
            <person name="Kunst F."/>
            <person name="Ogasawara N."/>
            <person name="Moszer I."/>
            <person name="Albertini A.M."/>
            <person name="Alloni G."/>
            <person name="Azevedo V."/>
            <person name="Bertero M.G."/>
            <person name="Bessieres P."/>
            <person name="Bolotin A."/>
            <person name="Borchert S."/>
            <person name="Borriss R."/>
            <person name="Boursier L."/>
            <person name="Brans A."/>
            <person name="Braun M."/>
            <person name="Brignell S.C."/>
            <person name="Bron S."/>
            <person name="Brouillet S."/>
            <person name="Bruschi C.V."/>
            <person name="Caldwell B."/>
            <person name="Capuano V."/>
            <person name="Carter N.M."/>
            <person name="Choi S.-K."/>
            <person name="Codani J.-J."/>
            <person name="Connerton I.F."/>
            <person name="Cummings N.J."/>
            <person name="Daniel R.A."/>
            <person name="Denizot F."/>
            <person name="Devine K.M."/>
            <person name="Duesterhoeft A."/>
            <person name="Ehrlich S.D."/>
            <person name="Emmerson P.T."/>
            <person name="Entian K.-D."/>
            <person name="Errington J."/>
            <person name="Fabret C."/>
            <person name="Ferrari E."/>
            <person name="Foulger D."/>
            <person name="Fritz C."/>
            <person name="Fujita M."/>
            <person name="Fujita Y."/>
            <person name="Fuma S."/>
            <person name="Galizzi A."/>
            <person name="Galleron N."/>
            <person name="Ghim S.-Y."/>
            <person name="Glaser P."/>
            <person name="Goffeau A."/>
            <person name="Golightly E.J."/>
            <person name="Grandi G."/>
            <person name="Guiseppi G."/>
            <person name="Guy B.J."/>
            <person name="Haga K."/>
            <person name="Haiech J."/>
            <person name="Harwood C.R."/>
            <person name="Henaut A."/>
            <person name="Hilbert H."/>
            <person name="Holsappel S."/>
            <person name="Hosono S."/>
            <person name="Hullo M.-F."/>
            <person name="Itaya M."/>
            <person name="Jones L.-M."/>
            <person name="Joris B."/>
            <person name="Karamata D."/>
            <person name="Kasahara Y."/>
            <person name="Klaerr-Blanchard M."/>
            <person name="Klein C."/>
            <person name="Kobayashi Y."/>
            <person name="Koetter P."/>
            <person name="Koningstein G."/>
            <person name="Krogh S."/>
            <person name="Kumano M."/>
            <person name="Kurita K."/>
            <person name="Lapidus A."/>
            <person name="Lardinois S."/>
            <person name="Lauber J."/>
            <person name="Lazarevic V."/>
            <person name="Lee S.-M."/>
            <person name="Levine A."/>
            <person name="Liu H."/>
            <person name="Masuda S."/>
            <person name="Mauel C."/>
            <person name="Medigue C."/>
            <person name="Medina N."/>
            <person name="Mellado R.P."/>
            <person name="Mizuno M."/>
            <person name="Moestl D."/>
            <person name="Nakai S."/>
            <person name="Noback M."/>
            <person name="Noone D."/>
            <person name="O'Reilly M."/>
            <person name="Ogawa K."/>
            <person name="Ogiwara A."/>
            <person name="Oudega B."/>
            <person name="Park S.-H."/>
            <person name="Parro V."/>
            <person name="Pohl T.M."/>
            <person name="Portetelle D."/>
            <person name="Porwollik S."/>
            <person name="Prescott A.M."/>
            <person name="Presecan E."/>
            <person name="Pujic P."/>
            <person name="Purnelle B."/>
            <person name="Rapoport G."/>
            <person name="Rey M."/>
            <person name="Reynolds S."/>
            <person name="Rieger M."/>
            <person name="Rivolta C."/>
            <person name="Rocha E."/>
            <person name="Roche B."/>
            <person name="Rose M."/>
            <person name="Sadaie Y."/>
            <person name="Sato T."/>
            <person name="Scanlan E."/>
            <person name="Schleich S."/>
            <person name="Schroeter R."/>
            <person name="Scoffone F."/>
            <person name="Sekiguchi J."/>
            <person name="Sekowska A."/>
            <person name="Seror S.J."/>
            <person name="Serror P."/>
            <person name="Shin B.-S."/>
            <person name="Soldo B."/>
            <person name="Sorokin A."/>
            <person name="Tacconi E."/>
            <person name="Takagi T."/>
            <person name="Takahashi H."/>
            <person name="Takemaru K."/>
            <person name="Takeuchi M."/>
            <person name="Tamakoshi A."/>
            <person name="Tanaka T."/>
            <person name="Terpstra P."/>
            <person name="Tognoni A."/>
            <person name="Tosato V."/>
            <person name="Uchiyama S."/>
            <person name="Vandenbol M."/>
            <person name="Vannier F."/>
            <person name="Vassarotti A."/>
            <person name="Viari A."/>
            <person name="Wambutt R."/>
            <person name="Wedler E."/>
            <person name="Wedler H."/>
            <person name="Weitzenegger T."/>
            <person name="Winters P."/>
            <person name="Wipat A."/>
            <person name="Yamamoto H."/>
            <person name="Yamane K."/>
            <person name="Yasumoto K."/>
            <person name="Yata K."/>
            <person name="Yoshida K."/>
            <person name="Yoshikawa H.-F."/>
            <person name="Zumstein E."/>
            <person name="Yoshikawa H."/>
            <person name="Danchin A."/>
        </authorList>
    </citation>
    <scope>NUCLEOTIDE SEQUENCE [LARGE SCALE GENOMIC DNA]</scope>
    <source>
        <strain>168</strain>
    </source>
</reference>
<keyword id="KW-1185">Reference proteome</keyword>
<dbReference type="EMBL" id="Z49782">
    <property type="protein sequence ID" value="CAA89864.1"/>
    <property type="molecule type" value="Genomic_DNA"/>
</dbReference>
<dbReference type="EMBL" id="AL009126">
    <property type="protein sequence ID" value="CAB15749.1"/>
    <property type="molecule type" value="Genomic_DNA"/>
</dbReference>
<dbReference type="PIR" id="S55417">
    <property type="entry name" value="S55417"/>
</dbReference>
<dbReference type="RefSeq" id="NP_391602.1">
    <property type="nucleotide sequence ID" value="NC_000964.3"/>
</dbReference>
<dbReference type="RefSeq" id="WP_003227597.1">
    <property type="nucleotide sequence ID" value="NZ_OZ025638.1"/>
</dbReference>
<dbReference type="SMR" id="P45863"/>
<dbReference type="FunCoup" id="P45863">
    <property type="interactions" value="80"/>
</dbReference>
<dbReference type="STRING" id="224308.BSU37210"/>
<dbReference type="PaxDb" id="224308-BSU37210"/>
<dbReference type="EnsemblBacteria" id="CAB15749">
    <property type="protein sequence ID" value="CAB15749"/>
    <property type="gene ID" value="BSU_37210"/>
</dbReference>
<dbReference type="GeneID" id="938458"/>
<dbReference type="KEGG" id="bsu:BSU37210"/>
<dbReference type="PATRIC" id="fig|224308.179.peg.4031"/>
<dbReference type="eggNOG" id="ENOG5030D5T">
    <property type="taxonomic scope" value="Bacteria"/>
</dbReference>
<dbReference type="InParanoid" id="P45863"/>
<dbReference type="OrthoDB" id="2879004at2"/>
<dbReference type="BioCyc" id="BSUB:BSU37210-MONOMER"/>
<dbReference type="Proteomes" id="UP000001570">
    <property type="component" value="Chromosome"/>
</dbReference>
<name>YWJC_BACSU</name>
<proteinExistence type="predicted"/>
<sequence length="90" mass="10471">MKNIKSLKVAAQAFTLRNLIHLYKMCHSGSHEVYIYSKKTMCKIKSLIELETFRMAHNEKEYLIVVEGTKASQLIEKFQNLIEPAEREAL</sequence>